<sequence length="9" mass="1185">EPRTPWDWV</sequence>
<dbReference type="GO" id="GO:0005576">
    <property type="term" value="C:extracellular region"/>
    <property type="evidence" value="ECO:0000314"/>
    <property type="project" value="UniProtKB"/>
</dbReference>
<dbReference type="GO" id="GO:0006952">
    <property type="term" value="P:defense response"/>
    <property type="evidence" value="ECO:0000270"/>
    <property type="project" value="UniProtKB"/>
</dbReference>
<reference evidence="2" key="1">
    <citation type="journal article" date="2005" name="Gen. Comp. Endocrinol.">
        <title>Bradykinin-related peptides and tryptophyllins in the skin secretions of the most primitive extant frog, Ascaphus truei.</title>
        <authorList>
            <person name="Conlon J.M."/>
            <person name="Jouenne T."/>
            <person name="Cosette P."/>
            <person name="Cosquer D."/>
            <person name="Vaudry H."/>
            <person name="Taylor C.K."/>
            <person name="Abel P.W."/>
        </authorList>
    </citation>
    <scope>PROTEIN SEQUENCE</scope>
    <scope>SUBCELLULAR LOCATION</scope>
    <scope>TISSUE SPECIFICITY</scope>
    <scope>MASS SPECTROMETRY</scope>
    <source>
        <tissue evidence="1">Skin secretion</tissue>
    </source>
</reference>
<name>TY4_ASCTR</name>
<protein>
    <recommendedName>
        <fullName>Tryptophyllin-4</fullName>
    </recommendedName>
</protein>
<evidence type="ECO:0000269" key="1">
    <source>
    </source>
</evidence>
<evidence type="ECO:0000305" key="2"/>
<proteinExistence type="evidence at protein level"/>
<comment type="function">
    <text>Putative defense peptide.</text>
</comment>
<comment type="subcellular location">
    <subcellularLocation>
        <location evidence="1">Secreted</location>
    </subcellularLocation>
</comment>
<comment type="tissue specificity">
    <text evidence="1">Expressed by the skin glands.</text>
</comment>
<comment type="mass spectrometry" mass="1184.6" method="MALDI" evidence="1"/>
<comment type="similarity">
    <text evidence="2">Belongs to the frog skin active peptide (FSAP) family. Tryptophillin subfamily.</text>
</comment>
<feature type="peptide" id="PRO_0000233927" description="Tryptophyllin-4">
    <location>
        <begin position="1"/>
        <end position="9"/>
    </location>
</feature>
<organism>
    <name type="scientific">Ascaphus truei</name>
    <name type="common">Coastal tailed frog</name>
    <dbReference type="NCBI Taxonomy" id="8439"/>
    <lineage>
        <taxon>Eukaryota</taxon>
        <taxon>Metazoa</taxon>
        <taxon>Chordata</taxon>
        <taxon>Craniata</taxon>
        <taxon>Vertebrata</taxon>
        <taxon>Euteleostomi</taxon>
        <taxon>Amphibia</taxon>
        <taxon>Batrachia</taxon>
        <taxon>Anura</taxon>
        <taxon>Ascaphidae</taxon>
        <taxon>Ascaphus</taxon>
    </lineage>
</organism>
<accession>P84822</accession>
<keyword id="KW-0878">Amphibian defense peptide</keyword>
<keyword id="KW-0903">Direct protein sequencing</keyword>
<keyword id="KW-0964">Secreted</keyword>